<sequence>MATNAKPVYQRILLKLSGEALQGAEGFGIDASVLDRMAQEVKELVELGIQVGVVIGGGNLFRGAGLAQAGMNRVVGDHMGMLATVMNGLAMRDALHRAYVNARLMSAIPLNGVCDNYSWAEAISLLRHNRVVIFAAGTGNPFFTTDSAACLRGIEIEADVVLKATKVDGVYSADPVKNPDATLYEQLTYQDVLEQELKVMDLAAFTLARDHNLPIRVFNMNKPGALRRVVMGENEGTLIAK</sequence>
<feature type="chain" id="PRO_1000054057" description="Uridylate kinase">
    <location>
        <begin position="1"/>
        <end position="241"/>
    </location>
</feature>
<feature type="region of interest" description="Involved in allosteric activation by GTP" evidence="1">
    <location>
        <begin position="23"/>
        <end position="28"/>
    </location>
</feature>
<feature type="binding site" evidence="1">
    <location>
        <begin position="15"/>
        <end position="18"/>
    </location>
    <ligand>
        <name>ATP</name>
        <dbReference type="ChEBI" id="CHEBI:30616"/>
    </ligand>
</feature>
<feature type="binding site" evidence="1">
    <location>
        <position position="57"/>
    </location>
    <ligand>
        <name>UMP</name>
        <dbReference type="ChEBI" id="CHEBI:57865"/>
    </ligand>
</feature>
<feature type="binding site" evidence="1">
    <location>
        <position position="58"/>
    </location>
    <ligand>
        <name>ATP</name>
        <dbReference type="ChEBI" id="CHEBI:30616"/>
    </ligand>
</feature>
<feature type="binding site" evidence="1">
    <location>
        <position position="62"/>
    </location>
    <ligand>
        <name>ATP</name>
        <dbReference type="ChEBI" id="CHEBI:30616"/>
    </ligand>
</feature>
<feature type="binding site" evidence="1">
    <location>
        <position position="77"/>
    </location>
    <ligand>
        <name>UMP</name>
        <dbReference type="ChEBI" id="CHEBI:57865"/>
    </ligand>
</feature>
<feature type="binding site" evidence="1">
    <location>
        <begin position="138"/>
        <end position="145"/>
    </location>
    <ligand>
        <name>UMP</name>
        <dbReference type="ChEBI" id="CHEBI:57865"/>
    </ligand>
</feature>
<feature type="binding site" evidence="1">
    <location>
        <position position="165"/>
    </location>
    <ligand>
        <name>ATP</name>
        <dbReference type="ChEBI" id="CHEBI:30616"/>
    </ligand>
</feature>
<feature type="binding site" evidence="1">
    <location>
        <position position="171"/>
    </location>
    <ligand>
        <name>ATP</name>
        <dbReference type="ChEBI" id="CHEBI:30616"/>
    </ligand>
</feature>
<feature type="binding site" evidence="1">
    <location>
        <position position="174"/>
    </location>
    <ligand>
        <name>ATP</name>
        <dbReference type="ChEBI" id="CHEBI:30616"/>
    </ligand>
</feature>
<keyword id="KW-0021">Allosteric enzyme</keyword>
<keyword id="KW-0067">ATP-binding</keyword>
<keyword id="KW-0963">Cytoplasm</keyword>
<keyword id="KW-0418">Kinase</keyword>
<keyword id="KW-0547">Nucleotide-binding</keyword>
<keyword id="KW-0665">Pyrimidine biosynthesis</keyword>
<keyword id="KW-0808">Transferase</keyword>
<name>PYRH_YERPN</name>
<gene>
    <name evidence="1" type="primary">pyrH</name>
    <name type="ordered locus">YPN_2954</name>
    <name type="ORF">YP516_3344</name>
</gene>
<comment type="function">
    <text evidence="1">Catalyzes the reversible phosphorylation of UMP to UDP.</text>
</comment>
<comment type="catalytic activity">
    <reaction evidence="1">
        <text>UMP + ATP = UDP + ADP</text>
        <dbReference type="Rhea" id="RHEA:24400"/>
        <dbReference type="ChEBI" id="CHEBI:30616"/>
        <dbReference type="ChEBI" id="CHEBI:57865"/>
        <dbReference type="ChEBI" id="CHEBI:58223"/>
        <dbReference type="ChEBI" id="CHEBI:456216"/>
        <dbReference type="EC" id="2.7.4.22"/>
    </reaction>
</comment>
<comment type="activity regulation">
    <text evidence="1">Allosterically activated by GTP. Inhibited by UTP.</text>
</comment>
<comment type="pathway">
    <text evidence="1">Pyrimidine metabolism; CTP biosynthesis via de novo pathway; UDP from UMP (UMPK route): step 1/1.</text>
</comment>
<comment type="subunit">
    <text evidence="1">Homohexamer.</text>
</comment>
<comment type="subcellular location">
    <subcellularLocation>
        <location evidence="1">Cytoplasm</location>
    </subcellularLocation>
</comment>
<comment type="similarity">
    <text evidence="1">Belongs to the UMP kinase family.</text>
</comment>
<proteinExistence type="inferred from homology"/>
<evidence type="ECO:0000255" key="1">
    <source>
        <dbReference type="HAMAP-Rule" id="MF_01220"/>
    </source>
</evidence>
<protein>
    <recommendedName>
        <fullName evidence="1">Uridylate kinase</fullName>
        <shortName evidence="1">UK</shortName>
        <ecNumber evidence="1">2.7.4.22</ecNumber>
    </recommendedName>
    <alternativeName>
        <fullName evidence="1">Uridine monophosphate kinase</fullName>
        <shortName evidence="1">UMP kinase</shortName>
        <shortName evidence="1">UMPK</shortName>
    </alternativeName>
</protein>
<accession>Q1CFE9</accession>
<accession>C4GWY0</accession>
<dbReference type="EC" id="2.7.4.22" evidence="1"/>
<dbReference type="EMBL" id="CP000305">
    <property type="protein sequence ID" value="ABG19281.1"/>
    <property type="molecule type" value="Genomic_DNA"/>
</dbReference>
<dbReference type="EMBL" id="ACNQ01000017">
    <property type="protein sequence ID" value="EEO75430.1"/>
    <property type="molecule type" value="Genomic_DNA"/>
</dbReference>
<dbReference type="RefSeq" id="WP_002212133.1">
    <property type="nucleotide sequence ID" value="NZ_ACNQ01000017.1"/>
</dbReference>
<dbReference type="SMR" id="Q1CFE9"/>
<dbReference type="GeneID" id="96662368"/>
<dbReference type="KEGG" id="ypn:YPN_2954"/>
<dbReference type="HOGENOM" id="CLU_033861_0_0_6"/>
<dbReference type="UniPathway" id="UPA00159">
    <property type="reaction ID" value="UER00275"/>
</dbReference>
<dbReference type="Proteomes" id="UP000008936">
    <property type="component" value="Chromosome"/>
</dbReference>
<dbReference type="GO" id="GO:0005829">
    <property type="term" value="C:cytosol"/>
    <property type="evidence" value="ECO:0007669"/>
    <property type="project" value="TreeGrafter"/>
</dbReference>
<dbReference type="GO" id="GO:0005524">
    <property type="term" value="F:ATP binding"/>
    <property type="evidence" value="ECO:0007669"/>
    <property type="project" value="UniProtKB-KW"/>
</dbReference>
<dbReference type="GO" id="GO:0033862">
    <property type="term" value="F:UMP kinase activity"/>
    <property type="evidence" value="ECO:0007669"/>
    <property type="project" value="UniProtKB-EC"/>
</dbReference>
<dbReference type="GO" id="GO:0044210">
    <property type="term" value="P:'de novo' CTP biosynthetic process"/>
    <property type="evidence" value="ECO:0007669"/>
    <property type="project" value="UniProtKB-UniRule"/>
</dbReference>
<dbReference type="GO" id="GO:0006225">
    <property type="term" value="P:UDP biosynthetic process"/>
    <property type="evidence" value="ECO:0007669"/>
    <property type="project" value="TreeGrafter"/>
</dbReference>
<dbReference type="CDD" id="cd04254">
    <property type="entry name" value="AAK_UMPK-PyrH-Ec"/>
    <property type="match status" value="1"/>
</dbReference>
<dbReference type="FunFam" id="3.40.1160.10:FF:000001">
    <property type="entry name" value="Uridylate kinase"/>
    <property type="match status" value="1"/>
</dbReference>
<dbReference type="Gene3D" id="3.40.1160.10">
    <property type="entry name" value="Acetylglutamate kinase-like"/>
    <property type="match status" value="1"/>
</dbReference>
<dbReference type="HAMAP" id="MF_01220_B">
    <property type="entry name" value="PyrH_B"/>
    <property type="match status" value="1"/>
</dbReference>
<dbReference type="InterPro" id="IPR036393">
    <property type="entry name" value="AceGlu_kinase-like_sf"/>
</dbReference>
<dbReference type="InterPro" id="IPR001048">
    <property type="entry name" value="Asp/Glu/Uridylate_kinase"/>
</dbReference>
<dbReference type="InterPro" id="IPR011817">
    <property type="entry name" value="Uridylate_kinase"/>
</dbReference>
<dbReference type="InterPro" id="IPR015963">
    <property type="entry name" value="Uridylate_kinase_bac"/>
</dbReference>
<dbReference type="NCBIfam" id="TIGR02075">
    <property type="entry name" value="pyrH_bact"/>
    <property type="match status" value="1"/>
</dbReference>
<dbReference type="PANTHER" id="PTHR42833">
    <property type="entry name" value="URIDYLATE KINASE"/>
    <property type="match status" value="1"/>
</dbReference>
<dbReference type="PANTHER" id="PTHR42833:SF4">
    <property type="entry name" value="URIDYLATE KINASE PUMPKIN, CHLOROPLASTIC"/>
    <property type="match status" value="1"/>
</dbReference>
<dbReference type="Pfam" id="PF00696">
    <property type="entry name" value="AA_kinase"/>
    <property type="match status" value="1"/>
</dbReference>
<dbReference type="PIRSF" id="PIRSF005650">
    <property type="entry name" value="Uridylate_kin"/>
    <property type="match status" value="1"/>
</dbReference>
<dbReference type="SUPFAM" id="SSF53633">
    <property type="entry name" value="Carbamate kinase-like"/>
    <property type="match status" value="1"/>
</dbReference>
<reference key="1">
    <citation type="journal article" date="2006" name="J. Bacteriol.">
        <title>Complete genome sequence of Yersinia pestis strains Antiqua and Nepal516: evidence of gene reduction in an emerging pathogen.</title>
        <authorList>
            <person name="Chain P.S.G."/>
            <person name="Hu P."/>
            <person name="Malfatti S.A."/>
            <person name="Radnedge L."/>
            <person name="Larimer F."/>
            <person name="Vergez L.M."/>
            <person name="Worsham P."/>
            <person name="Chu M.C."/>
            <person name="Andersen G.L."/>
        </authorList>
    </citation>
    <scope>NUCLEOTIDE SEQUENCE [LARGE SCALE GENOMIC DNA]</scope>
    <source>
        <strain>Nepal516</strain>
    </source>
</reference>
<reference key="2">
    <citation type="submission" date="2009-04" db="EMBL/GenBank/DDBJ databases">
        <title>Yersinia pestis Nepal516A whole genome shotgun sequencing project.</title>
        <authorList>
            <person name="Plunkett G. III"/>
            <person name="Anderson B.D."/>
            <person name="Baumler D.J."/>
            <person name="Burland V."/>
            <person name="Cabot E.L."/>
            <person name="Glasner J.D."/>
            <person name="Mau B."/>
            <person name="Neeno-Eckwall E."/>
            <person name="Perna N.T."/>
            <person name="Munk A.C."/>
            <person name="Tapia R."/>
            <person name="Green L.D."/>
            <person name="Rogers Y.C."/>
            <person name="Detter J.C."/>
            <person name="Bruce D.C."/>
            <person name="Brettin T.S."/>
        </authorList>
    </citation>
    <scope>NUCLEOTIDE SEQUENCE [LARGE SCALE GENOMIC DNA]</scope>
    <source>
        <strain>Nepal516</strain>
    </source>
</reference>
<organism>
    <name type="scientific">Yersinia pestis bv. Antiqua (strain Nepal516)</name>
    <dbReference type="NCBI Taxonomy" id="377628"/>
    <lineage>
        <taxon>Bacteria</taxon>
        <taxon>Pseudomonadati</taxon>
        <taxon>Pseudomonadota</taxon>
        <taxon>Gammaproteobacteria</taxon>
        <taxon>Enterobacterales</taxon>
        <taxon>Yersiniaceae</taxon>
        <taxon>Yersinia</taxon>
    </lineage>
</organism>